<sequence length="120" mass="13047">MKVSRRESTRRRHRRVRRTIVGTPARPRLSVFRSNNHIYAQVIDDAAGHTLAAASSLDPDLRQSLTSGGNQQASAAVGKLIAERAQAKGVTTVVFDRGGNLYHGRVKALAEAAREAGLEF</sequence>
<reference key="1">
    <citation type="submission" date="2005-08" db="EMBL/GenBank/DDBJ databases">
        <title>Complete sequence of chromosome 1 of Synechococcus elongatus PCC 7942.</title>
        <authorList>
            <consortium name="US DOE Joint Genome Institute"/>
            <person name="Copeland A."/>
            <person name="Lucas S."/>
            <person name="Lapidus A."/>
            <person name="Barry K."/>
            <person name="Detter J.C."/>
            <person name="Glavina T."/>
            <person name="Hammon N."/>
            <person name="Israni S."/>
            <person name="Pitluck S."/>
            <person name="Schmutz J."/>
            <person name="Larimer F."/>
            <person name="Land M."/>
            <person name="Kyrpides N."/>
            <person name="Lykidis A."/>
            <person name="Golden S."/>
            <person name="Richardson P."/>
        </authorList>
    </citation>
    <scope>NUCLEOTIDE SEQUENCE [LARGE SCALE GENOMIC DNA]</scope>
    <source>
        <strain>ATCC 33912 / PCC 7942 / FACHB-805</strain>
    </source>
</reference>
<evidence type="ECO:0000255" key="1">
    <source>
        <dbReference type="HAMAP-Rule" id="MF_01337"/>
    </source>
</evidence>
<evidence type="ECO:0000305" key="2"/>
<comment type="function">
    <text evidence="1">This is one of the proteins that bind and probably mediate the attachment of the 5S RNA into the large ribosomal subunit, where it forms part of the central protuberance.</text>
</comment>
<comment type="subunit">
    <text evidence="1">Part of the 50S ribosomal subunit; part of the 5S rRNA/L5/L18/L25 subcomplex. Contacts the 5S and 23S rRNAs.</text>
</comment>
<comment type="similarity">
    <text evidence="1">Belongs to the universal ribosomal protein uL18 family.</text>
</comment>
<protein>
    <recommendedName>
        <fullName evidence="1">Large ribosomal subunit protein uL18</fullName>
    </recommendedName>
    <alternativeName>
        <fullName evidence="2">50S ribosomal protein L18</fullName>
    </alternativeName>
</protein>
<keyword id="KW-1185">Reference proteome</keyword>
<keyword id="KW-0687">Ribonucleoprotein</keyword>
<keyword id="KW-0689">Ribosomal protein</keyword>
<keyword id="KW-0694">RNA-binding</keyword>
<keyword id="KW-0699">rRNA-binding</keyword>
<proteinExistence type="inferred from homology"/>
<dbReference type="EMBL" id="CP000100">
    <property type="protein sequence ID" value="ABB58247.1"/>
    <property type="molecule type" value="Genomic_DNA"/>
</dbReference>
<dbReference type="RefSeq" id="WP_011244190.1">
    <property type="nucleotide sequence ID" value="NZ_JACJTX010000001.1"/>
</dbReference>
<dbReference type="SMR" id="Q31L22"/>
<dbReference type="STRING" id="1140.Synpcc7942_2217"/>
<dbReference type="PaxDb" id="1140-Synpcc7942_2217"/>
<dbReference type="GeneID" id="72431100"/>
<dbReference type="KEGG" id="syf:Synpcc7942_2217"/>
<dbReference type="eggNOG" id="COG0256">
    <property type="taxonomic scope" value="Bacteria"/>
</dbReference>
<dbReference type="HOGENOM" id="CLU_098841_0_1_3"/>
<dbReference type="OrthoDB" id="9810939at2"/>
<dbReference type="BioCyc" id="SYNEL:SYNPCC7942_2217-MONOMER"/>
<dbReference type="Proteomes" id="UP000889800">
    <property type="component" value="Chromosome"/>
</dbReference>
<dbReference type="GO" id="GO:0022625">
    <property type="term" value="C:cytosolic large ribosomal subunit"/>
    <property type="evidence" value="ECO:0007669"/>
    <property type="project" value="TreeGrafter"/>
</dbReference>
<dbReference type="GO" id="GO:0008097">
    <property type="term" value="F:5S rRNA binding"/>
    <property type="evidence" value="ECO:0007669"/>
    <property type="project" value="TreeGrafter"/>
</dbReference>
<dbReference type="GO" id="GO:0003735">
    <property type="term" value="F:structural constituent of ribosome"/>
    <property type="evidence" value="ECO:0007669"/>
    <property type="project" value="InterPro"/>
</dbReference>
<dbReference type="GO" id="GO:0006412">
    <property type="term" value="P:translation"/>
    <property type="evidence" value="ECO:0007669"/>
    <property type="project" value="UniProtKB-UniRule"/>
</dbReference>
<dbReference type="CDD" id="cd00432">
    <property type="entry name" value="Ribosomal_L18_L5e"/>
    <property type="match status" value="1"/>
</dbReference>
<dbReference type="FunFam" id="3.30.420.100:FF:000001">
    <property type="entry name" value="50S ribosomal protein L18"/>
    <property type="match status" value="1"/>
</dbReference>
<dbReference type="Gene3D" id="3.30.420.100">
    <property type="match status" value="1"/>
</dbReference>
<dbReference type="HAMAP" id="MF_01337_B">
    <property type="entry name" value="Ribosomal_uL18_B"/>
    <property type="match status" value="1"/>
</dbReference>
<dbReference type="InterPro" id="IPR004389">
    <property type="entry name" value="Ribosomal_uL18_bac-type"/>
</dbReference>
<dbReference type="InterPro" id="IPR005484">
    <property type="entry name" value="Ribosomal_uL18_bac/euk"/>
</dbReference>
<dbReference type="NCBIfam" id="TIGR00060">
    <property type="entry name" value="L18_bact"/>
    <property type="match status" value="1"/>
</dbReference>
<dbReference type="PANTHER" id="PTHR12899">
    <property type="entry name" value="39S RIBOSOMAL PROTEIN L18, MITOCHONDRIAL"/>
    <property type="match status" value="1"/>
</dbReference>
<dbReference type="PANTHER" id="PTHR12899:SF3">
    <property type="entry name" value="LARGE RIBOSOMAL SUBUNIT PROTEIN UL18M"/>
    <property type="match status" value="1"/>
</dbReference>
<dbReference type="Pfam" id="PF00861">
    <property type="entry name" value="Ribosomal_L18p"/>
    <property type="match status" value="1"/>
</dbReference>
<dbReference type="SUPFAM" id="SSF53137">
    <property type="entry name" value="Translational machinery components"/>
    <property type="match status" value="1"/>
</dbReference>
<accession>Q31L22</accession>
<feature type="chain" id="PRO_0000251386" description="Large ribosomal subunit protein uL18">
    <location>
        <begin position="1"/>
        <end position="120"/>
    </location>
</feature>
<name>RL18_SYNE7</name>
<organism>
    <name type="scientific">Synechococcus elongatus (strain ATCC 33912 / PCC 7942 / FACHB-805)</name>
    <name type="common">Anacystis nidulans R2</name>
    <dbReference type="NCBI Taxonomy" id="1140"/>
    <lineage>
        <taxon>Bacteria</taxon>
        <taxon>Bacillati</taxon>
        <taxon>Cyanobacteriota</taxon>
        <taxon>Cyanophyceae</taxon>
        <taxon>Synechococcales</taxon>
        <taxon>Synechococcaceae</taxon>
        <taxon>Synechococcus</taxon>
    </lineage>
</organism>
<gene>
    <name evidence="1" type="primary">rplR</name>
    <name evidence="1" type="synonym">rpl18</name>
    <name type="ordered locus">Synpcc7942_2217</name>
</gene>